<dbReference type="EMBL" id="CR382138">
    <property type="protein sequence ID" value="CAG89505.2"/>
    <property type="molecule type" value="Genomic_DNA"/>
</dbReference>
<dbReference type="RefSeq" id="XP_461123.2">
    <property type="nucleotide sequence ID" value="XM_461123.1"/>
</dbReference>
<dbReference type="FunCoup" id="Q6BKZ8">
    <property type="interactions" value="46"/>
</dbReference>
<dbReference type="GlyCosmos" id="Q6BKZ8">
    <property type="glycosylation" value="3 sites, No reported glycans"/>
</dbReference>
<dbReference type="GeneID" id="2903673"/>
<dbReference type="KEGG" id="dha:DEHA2F17512g"/>
<dbReference type="VEuPathDB" id="FungiDB:DEHA2F17512g"/>
<dbReference type="eggNOG" id="ENOG502QS8N">
    <property type="taxonomic scope" value="Eukaryota"/>
</dbReference>
<dbReference type="HOGENOM" id="CLU_044602_0_0_1"/>
<dbReference type="InParanoid" id="Q6BKZ8"/>
<dbReference type="OMA" id="YKINEWG"/>
<dbReference type="OrthoDB" id="5546453at2759"/>
<dbReference type="UniPathway" id="UPA00196"/>
<dbReference type="Proteomes" id="UP000000599">
    <property type="component" value="Chromosome F"/>
</dbReference>
<dbReference type="GO" id="GO:0005789">
    <property type="term" value="C:endoplasmic reticulum membrane"/>
    <property type="evidence" value="ECO:0007669"/>
    <property type="project" value="UniProtKB-SubCell"/>
</dbReference>
<dbReference type="GO" id="GO:1990529">
    <property type="term" value="C:glycosylphosphatidylinositol-mannosyltransferase I complex"/>
    <property type="evidence" value="ECO:0007669"/>
    <property type="project" value="TreeGrafter"/>
</dbReference>
<dbReference type="GO" id="GO:0000030">
    <property type="term" value="F:mannosyltransferase activity"/>
    <property type="evidence" value="ECO:0007669"/>
    <property type="project" value="TreeGrafter"/>
</dbReference>
<dbReference type="GO" id="GO:0006506">
    <property type="term" value="P:GPI anchor biosynthetic process"/>
    <property type="evidence" value="ECO:0007669"/>
    <property type="project" value="UniProtKB-UniPathway"/>
</dbReference>
<dbReference type="InterPro" id="IPR042322">
    <property type="entry name" value="Pbn1"/>
</dbReference>
<dbReference type="InterPro" id="IPR013233">
    <property type="entry name" value="PIG-X/PBN1"/>
</dbReference>
<dbReference type="PANTHER" id="PTHR28533">
    <property type="entry name" value="PROTEIN PBN1"/>
    <property type="match status" value="1"/>
</dbReference>
<dbReference type="PANTHER" id="PTHR28533:SF1">
    <property type="entry name" value="PROTEIN PBN1"/>
    <property type="match status" value="1"/>
</dbReference>
<dbReference type="Pfam" id="PF08320">
    <property type="entry name" value="PIG-X"/>
    <property type="match status" value="1"/>
</dbReference>
<dbReference type="SMART" id="SM00780">
    <property type="entry name" value="PIG-X"/>
    <property type="match status" value="1"/>
</dbReference>
<evidence type="ECO:0000250" key="1"/>
<evidence type="ECO:0000255" key="2"/>
<evidence type="ECO:0000305" key="3"/>
<name>PBN1_DEBHA</name>
<comment type="function">
    <text evidence="1">Required for proper folding and/or the stability of a subset of proteins in the endoplasmic reticulum. Component of glycosylphosphatidylinositol-mannosyltransferase 1 which transfers the first of the 4 mannoses in the GPI-anchor precursors during GPI-anchor biosynthesis. Probably acts by stabilizing the mannosyltransferase GPI14 (By similarity).</text>
</comment>
<comment type="pathway">
    <text>Glycolipid biosynthesis; glycosylphosphatidylinositol-anchor biosynthesis.</text>
</comment>
<comment type="subcellular location">
    <subcellularLocation>
        <location evidence="1">Endoplasmic reticulum membrane</location>
        <topology evidence="1">Single-pass type III membrane protein</topology>
    </subcellularLocation>
</comment>
<comment type="similarity">
    <text evidence="3">Belongs to the PIGX family.</text>
</comment>
<feature type="chain" id="PRO_0000246303" description="Protein PBN1">
    <location>
        <begin position="1"/>
        <end position="450"/>
    </location>
</feature>
<feature type="topological domain" description="Lumenal" evidence="2">
    <location>
        <begin position="1"/>
        <end position="413"/>
    </location>
</feature>
<feature type="transmembrane region" description="Helical" evidence="2">
    <location>
        <begin position="414"/>
        <end position="434"/>
    </location>
</feature>
<feature type="topological domain" description="Cytoplasmic" evidence="2">
    <location>
        <begin position="435"/>
        <end position="450"/>
    </location>
</feature>
<feature type="glycosylation site" description="N-linked (GlcNAc...) asparagine" evidence="2">
    <location>
        <position position="172"/>
    </location>
</feature>
<feature type="glycosylation site" description="N-linked (GlcNAc...) asparagine" evidence="2">
    <location>
        <position position="277"/>
    </location>
</feature>
<feature type="glycosylation site" description="N-linked (GlcNAc...) asparagine" evidence="2">
    <location>
        <position position="339"/>
    </location>
</feature>
<accession>Q6BKZ8</accession>
<keyword id="KW-0256">Endoplasmic reticulum</keyword>
<keyword id="KW-0325">Glycoprotein</keyword>
<keyword id="KW-0337">GPI-anchor biosynthesis</keyword>
<keyword id="KW-0472">Membrane</keyword>
<keyword id="KW-1185">Reference proteome</keyword>
<keyword id="KW-0812">Transmembrane</keyword>
<keyword id="KW-1133">Transmembrane helix</keyword>
<proteinExistence type="inferred from homology"/>
<protein>
    <recommendedName>
        <fullName>Protein PBN1</fullName>
    </recommendedName>
</protein>
<gene>
    <name type="primary">PBN1</name>
    <name type="ordered locus">DEHA2F17512g</name>
</gene>
<sequence>MIRQRTTIFNPTKSNDGIIEAVDSSHLQLSSIDYQCEDKFILQTPKFKYIDKLRIQLNQFHSESILFSKYQAGLNIYCKPKIGDEGFNQEEFFNELNQMMTNLFDIPRDGWINSLDTLFYHEPSTGSESFIEYVRKLTGNESNVNLEVSPNIEYVYDGEKVVLKLNGKSLANTTITKNSKFNKEIGLFLIEKGISSEDDIVLSGLRVILNGDDDKNEEYLQKTLFHVKRRQRQSRGTYSSQVKENGMHPFLKTDIHSDIPNDEDLIQCKLYYYLDLNKSFFVDKYQLPKEFTSYVNFGNTDLELPEYKINEWGSEILMEIENNQQISLPLHSRYQLPNNESSIRVTGINDPLIFYGCDVKDSYLLESSPFDNRLDIGGNYERFFTDNTVFYHLSSHENQLQINIPRGNESIKKINFVTNLIFIAGVVLIFYKIVQGIFKRNPSAGTRKNE</sequence>
<organism>
    <name type="scientific">Debaryomyces hansenii (strain ATCC 36239 / CBS 767 / BCRC 21394 / JCM 1990 / NBRC 0083 / IGC 2968)</name>
    <name type="common">Yeast</name>
    <name type="synonym">Torulaspora hansenii</name>
    <dbReference type="NCBI Taxonomy" id="284592"/>
    <lineage>
        <taxon>Eukaryota</taxon>
        <taxon>Fungi</taxon>
        <taxon>Dikarya</taxon>
        <taxon>Ascomycota</taxon>
        <taxon>Saccharomycotina</taxon>
        <taxon>Pichiomycetes</taxon>
        <taxon>Debaryomycetaceae</taxon>
        <taxon>Debaryomyces</taxon>
    </lineage>
</organism>
<reference key="1">
    <citation type="journal article" date="2004" name="Nature">
        <title>Genome evolution in yeasts.</title>
        <authorList>
            <person name="Dujon B."/>
            <person name="Sherman D."/>
            <person name="Fischer G."/>
            <person name="Durrens P."/>
            <person name="Casaregola S."/>
            <person name="Lafontaine I."/>
            <person name="de Montigny J."/>
            <person name="Marck C."/>
            <person name="Neuveglise C."/>
            <person name="Talla E."/>
            <person name="Goffard N."/>
            <person name="Frangeul L."/>
            <person name="Aigle M."/>
            <person name="Anthouard V."/>
            <person name="Babour A."/>
            <person name="Barbe V."/>
            <person name="Barnay S."/>
            <person name="Blanchin S."/>
            <person name="Beckerich J.-M."/>
            <person name="Beyne E."/>
            <person name="Bleykasten C."/>
            <person name="Boisrame A."/>
            <person name="Boyer J."/>
            <person name="Cattolico L."/>
            <person name="Confanioleri F."/>
            <person name="de Daruvar A."/>
            <person name="Despons L."/>
            <person name="Fabre E."/>
            <person name="Fairhead C."/>
            <person name="Ferry-Dumazet H."/>
            <person name="Groppi A."/>
            <person name="Hantraye F."/>
            <person name="Hennequin C."/>
            <person name="Jauniaux N."/>
            <person name="Joyet P."/>
            <person name="Kachouri R."/>
            <person name="Kerrest A."/>
            <person name="Koszul R."/>
            <person name="Lemaire M."/>
            <person name="Lesur I."/>
            <person name="Ma L."/>
            <person name="Muller H."/>
            <person name="Nicaud J.-M."/>
            <person name="Nikolski M."/>
            <person name="Oztas S."/>
            <person name="Ozier-Kalogeropoulos O."/>
            <person name="Pellenz S."/>
            <person name="Potier S."/>
            <person name="Richard G.-F."/>
            <person name="Straub M.-L."/>
            <person name="Suleau A."/>
            <person name="Swennen D."/>
            <person name="Tekaia F."/>
            <person name="Wesolowski-Louvel M."/>
            <person name="Westhof E."/>
            <person name="Wirth B."/>
            <person name="Zeniou-Meyer M."/>
            <person name="Zivanovic Y."/>
            <person name="Bolotin-Fukuhara M."/>
            <person name="Thierry A."/>
            <person name="Bouchier C."/>
            <person name="Caudron B."/>
            <person name="Scarpelli C."/>
            <person name="Gaillardin C."/>
            <person name="Weissenbach J."/>
            <person name="Wincker P."/>
            <person name="Souciet J.-L."/>
        </authorList>
    </citation>
    <scope>NUCLEOTIDE SEQUENCE [LARGE SCALE GENOMIC DNA]</scope>
    <source>
        <strain>ATCC 36239 / CBS 767 / BCRC 21394 / JCM 1990 / NBRC 0083 / IGC 2968</strain>
    </source>
</reference>